<keyword id="KW-0963">Cytoplasm</keyword>
<keyword id="KW-0441">Lipid A biosynthesis</keyword>
<keyword id="KW-0444">Lipid biosynthesis</keyword>
<keyword id="KW-0443">Lipid metabolism</keyword>
<keyword id="KW-0456">Lyase</keyword>
<keyword id="KW-1185">Reference proteome</keyword>
<protein>
    <recommendedName>
        <fullName evidence="1">3-hydroxyacyl-[acyl-carrier-protein] dehydratase FabZ</fullName>
        <ecNumber evidence="1">4.2.1.59</ecNumber>
    </recommendedName>
    <alternativeName>
        <fullName evidence="1">(3R)-hydroxymyristoyl-[acyl-carrier-protein] dehydratase</fullName>
        <shortName evidence="1">(3R)-hydroxymyristoyl-ACP dehydrase</shortName>
    </alternativeName>
    <alternativeName>
        <fullName evidence="1">Beta-hydroxyacyl-ACP dehydratase</fullName>
    </alternativeName>
</protein>
<name>FABZ_TERTT</name>
<accession>C5BQG6</accession>
<comment type="function">
    <text evidence="1">Involved in unsaturated fatty acids biosynthesis. Catalyzes the dehydration of short chain beta-hydroxyacyl-ACPs and long chain saturated and unsaturated beta-hydroxyacyl-ACPs.</text>
</comment>
<comment type="catalytic activity">
    <reaction evidence="1">
        <text>a (3R)-hydroxyacyl-[ACP] = a (2E)-enoyl-[ACP] + H2O</text>
        <dbReference type="Rhea" id="RHEA:13097"/>
        <dbReference type="Rhea" id="RHEA-COMP:9925"/>
        <dbReference type="Rhea" id="RHEA-COMP:9945"/>
        <dbReference type="ChEBI" id="CHEBI:15377"/>
        <dbReference type="ChEBI" id="CHEBI:78784"/>
        <dbReference type="ChEBI" id="CHEBI:78827"/>
        <dbReference type="EC" id="4.2.1.59"/>
    </reaction>
</comment>
<comment type="subcellular location">
    <subcellularLocation>
        <location evidence="1">Cytoplasm</location>
    </subcellularLocation>
</comment>
<comment type="similarity">
    <text evidence="1">Belongs to the thioester dehydratase family. FabZ subfamily.</text>
</comment>
<feature type="chain" id="PRO_1000205950" description="3-hydroxyacyl-[acyl-carrier-protein] dehydratase FabZ">
    <location>
        <begin position="1"/>
        <end position="146"/>
    </location>
</feature>
<feature type="active site" evidence="1">
    <location>
        <position position="48"/>
    </location>
</feature>
<reference key="1">
    <citation type="journal article" date="2009" name="PLoS ONE">
        <title>The complete genome of Teredinibacter turnerae T7901: an intracellular endosymbiont of marine wood-boring bivalves (shipworms).</title>
        <authorList>
            <person name="Yang J.C."/>
            <person name="Madupu R."/>
            <person name="Durkin A.S."/>
            <person name="Ekborg N.A."/>
            <person name="Pedamallu C.S."/>
            <person name="Hostetler J.B."/>
            <person name="Radune D."/>
            <person name="Toms B.S."/>
            <person name="Henrissat B."/>
            <person name="Coutinho P.M."/>
            <person name="Schwarz S."/>
            <person name="Field L."/>
            <person name="Trindade-Silva A.E."/>
            <person name="Soares C.A.G."/>
            <person name="Elshahawi S."/>
            <person name="Hanora A."/>
            <person name="Schmidt E.W."/>
            <person name="Haygood M.G."/>
            <person name="Posfai J."/>
            <person name="Benner J."/>
            <person name="Madinger C."/>
            <person name="Nove J."/>
            <person name="Anton B."/>
            <person name="Chaudhary K."/>
            <person name="Foster J."/>
            <person name="Holman A."/>
            <person name="Kumar S."/>
            <person name="Lessard P.A."/>
            <person name="Luyten Y.A."/>
            <person name="Slatko B."/>
            <person name="Wood N."/>
            <person name="Wu B."/>
            <person name="Teplitski M."/>
            <person name="Mougous J.D."/>
            <person name="Ward N."/>
            <person name="Eisen J.A."/>
            <person name="Badger J.H."/>
            <person name="Distel D.L."/>
        </authorList>
    </citation>
    <scope>NUCLEOTIDE SEQUENCE [LARGE SCALE GENOMIC DNA]</scope>
    <source>
        <strain>ATCC 39867 / T7901</strain>
    </source>
</reference>
<sequence>MLDILEIRKYLPHRYPFLMIDRVVELIEGESITAYKNVSINEEIFQGHFPHFPVFPGVLLIEAMAQACGVLGFKTANKTPEDGSIYLFAGIDGVRFKRQVVPGDRVYFECKVVSAKRGIWKFDCVAKVDGELVTSATIMCADRVVG</sequence>
<organism>
    <name type="scientific">Teredinibacter turnerae (strain ATCC 39867 / T7901)</name>
    <dbReference type="NCBI Taxonomy" id="377629"/>
    <lineage>
        <taxon>Bacteria</taxon>
        <taxon>Pseudomonadati</taxon>
        <taxon>Pseudomonadota</taxon>
        <taxon>Gammaproteobacteria</taxon>
        <taxon>Cellvibrionales</taxon>
        <taxon>Cellvibrionaceae</taxon>
        <taxon>Teredinibacter</taxon>
    </lineage>
</organism>
<proteinExistence type="inferred from homology"/>
<evidence type="ECO:0000255" key="1">
    <source>
        <dbReference type="HAMAP-Rule" id="MF_00406"/>
    </source>
</evidence>
<gene>
    <name evidence="1" type="primary">fabZ</name>
    <name type="ordered locus">TERTU_1015</name>
</gene>
<dbReference type="EC" id="4.2.1.59" evidence="1"/>
<dbReference type="EMBL" id="CP001614">
    <property type="protein sequence ID" value="ACR12022.1"/>
    <property type="molecule type" value="Genomic_DNA"/>
</dbReference>
<dbReference type="RefSeq" id="WP_015818134.1">
    <property type="nucleotide sequence ID" value="NC_012997.1"/>
</dbReference>
<dbReference type="SMR" id="C5BQG6"/>
<dbReference type="STRING" id="377629.TERTU_1015"/>
<dbReference type="GeneID" id="58408786"/>
<dbReference type="GeneID" id="93857638"/>
<dbReference type="KEGG" id="ttu:TERTU_1015"/>
<dbReference type="eggNOG" id="COG0764">
    <property type="taxonomic scope" value="Bacteria"/>
</dbReference>
<dbReference type="HOGENOM" id="CLU_078912_1_0_6"/>
<dbReference type="OrthoDB" id="9772788at2"/>
<dbReference type="Proteomes" id="UP000009080">
    <property type="component" value="Chromosome"/>
</dbReference>
<dbReference type="GO" id="GO:0005737">
    <property type="term" value="C:cytoplasm"/>
    <property type="evidence" value="ECO:0007669"/>
    <property type="project" value="UniProtKB-SubCell"/>
</dbReference>
<dbReference type="GO" id="GO:0016020">
    <property type="term" value="C:membrane"/>
    <property type="evidence" value="ECO:0007669"/>
    <property type="project" value="GOC"/>
</dbReference>
<dbReference type="GO" id="GO:0019171">
    <property type="term" value="F:(3R)-hydroxyacyl-[acyl-carrier-protein] dehydratase activity"/>
    <property type="evidence" value="ECO:0007669"/>
    <property type="project" value="UniProtKB-EC"/>
</dbReference>
<dbReference type="GO" id="GO:0006633">
    <property type="term" value="P:fatty acid biosynthetic process"/>
    <property type="evidence" value="ECO:0007669"/>
    <property type="project" value="UniProtKB-UniRule"/>
</dbReference>
<dbReference type="GO" id="GO:0009245">
    <property type="term" value="P:lipid A biosynthetic process"/>
    <property type="evidence" value="ECO:0007669"/>
    <property type="project" value="UniProtKB-UniRule"/>
</dbReference>
<dbReference type="CDD" id="cd01288">
    <property type="entry name" value="FabZ"/>
    <property type="match status" value="1"/>
</dbReference>
<dbReference type="FunFam" id="3.10.129.10:FF:000001">
    <property type="entry name" value="3-hydroxyacyl-[acyl-carrier-protein] dehydratase FabZ"/>
    <property type="match status" value="1"/>
</dbReference>
<dbReference type="Gene3D" id="3.10.129.10">
    <property type="entry name" value="Hotdog Thioesterase"/>
    <property type="match status" value="1"/>
</dbReference>
<dbReference type="HAMAP" id="MF_00406">
    <property type="entry name" value="FabZ"/>
    <property type="match status" value="1"/>
</dbReference>
<dbReference type="InterPro" id="IPR013114">
    <property type="entry name" value="FabA_FabZ"/>
</dbReference>
<dbReference type="InterPro" id="IPR010084">
    <property type="entry name" value="FabZ"/>
</dbReference>
<dbReference type="InterPro" id="IPR029069">
    <property type="entry name" value="HotDog_dom_sf"/>
</dbReference>
<dbReference type="NCBIfam" id="TIGR01750">
    <property type="entry name" value="fabZ"/>
    <property type="match status" value="1"/>
</dbReference>
<dbReference type="NCBIfam" id="NF000582">
    <property type="entry name" value="PRK00006.1"/>
    <property type="match status" value="1"/>
</dbReference>
<dbReference type="PANTHER" id="PTHR30272">
    <property type="entry name" value="3-HYDROXYACYL-[ACYL-CARRIER-PROTEIN] DEHYDRATASE"/>
    <property type="match status" value="1"/>
</dbReference>
<dbReference type="PANTHER" id="PTHR30272:SF1">
    <property type="entry name" value="3-HYDROXYACYL-[ACYL-CARRIER-PROTEIN] DEHYDRATASE"/>
    <property type="match status" value="1"/>
</dbReference>
<dbReference type="Pfam" id="PF07977">
    <property type="entry name" value="FabA"/>
    <property type="match status" value="1"/>
</dbReference>
<dbReference type="SUPFAM" id="SSF54637">
    <property type="entry name" value="Thioesterase/thiol ester dehydrase-isomerase"/>
    <property type="match status" value="1"/>
</dbReference>